<protein>
    <recommendedName>
        <fullName evidence="2">5-formaminoimidazole-4-carboxamide-1-(beta)-D-ribofuranosyl 5'-monophosphate synthetase</fullName>
        <ecNumber evidence="2">6.3.4.23</ecNumber>
    </recommendedName>
    <alternativeName>
        <fullName evidence="2">5-aminoimidazole-4-carboxamide-1-beta-D-ribofuranosyl 5'-monophosphate--formate ligase</fullName>
    </alternativeName>
</protein>
<comment type="function">
    <text evidence="2">Catalyzes the ATP- and formate-dependent formylation of 5-aminoimidazole-4-carboxamide-1-beta-d-ribofuranosyl 5'-monophosphate (AICAR) to 5-formaminoimidazole-4-carboxamide-1-beta-d-ribofuranosyl 5'-monophosphate (FAICAR) in the absence of folates.</text>
</comment>
<comment type="catalytic activity">
    <reaction evidence="2">
        <text>5-amino-1-(5-phospho-beta-D-ribosyl)imidazole-4-carboxamide + formate + ATP = 5-formamido-1-(5-phospho-D-ribosyl)imidazole-4-carboxamide + ADP + phosphate</text>
        <dbReference type="Rhea" id="RHEA:24836"/>
        <dbReference type="ChEBI" id="CHEBI:15740"/>
        <dbReference type="ChEBI" id="CHEBI:30616"/>
        <dbReference type="ChEBI" id="CHEBI:43474"/>
        <dbReference type="ChEBI" id="CHEBI:58467"/>
        <dbReference type="ChEBI" id="CHEBI:58475"/>
        <dbReference type="ChEBI" id="CHEBI:456216"/>
        <dbReference type="EC" id="6.3.4.23"/>
    </reaction>
</comment>
<comment type="cofactor">
    <cofactor evidence="1">
        <name>Mg(2+)</name>
        <dbReference type="ChEBI" id="CHEBI:18420"/>
    </cofactor>
    <cofactor evidence="1">
        <name>Mn(2+)</name>
        <dbReference type="ChEBI" id="CHEBI:29035"/>
    </cofactor>
    <text evidence="1">Binds 1 Mg(2+) or Mn(2+) ion per subunit.</text>
</comment>
<comment type="pathway">
    <text evidence="2">Purine metabolism; IMP biosynthesis via de novo pathway; 5-formamido-1-(5-phospho-D-ribosyl)imidazole-4-carboxamide from 5-amino-1-(5-phospho-D-ribosyl)imidazole-4-carboxamide (formate route): step 1/1.</text>
</comment>
<comment type="similarity">
    <text evidence="2">Belongs to the phosphohexose mutase family.</text>
</comment>
<organism>
    <name type="scientific">Nitrosopumilus maritimus (strain SCM1)</name>
    <dbReference type="NCBI Taxonomy" id="436308"/>
    <lineage>
        <taxon>Archaea</taxon>
        <taxon>Nitrososphaerota</taxon>
        <taxon>Nitrososphaeria</taxon>
        <taxon>Nitrosopumilales</taxon>
        <taxon>Nitrosopumilaceae</taxon>
        <taxon>Nitrosopumilus</taxon>
    </lineage>
</organism>
<accession>A9A1D3</accession>
<evidence type="ECO:0000250" key="1"/>
<evidence type="ECO:0000255" key="2">
    <source>
        <dbReference type="HAMAP-Rule" id="MF_01163"/>
    </source>
</evidence>
<dbReference type="EC" id="6.3.4.23" evidence="2"/>
<dbReference type="EMBL" id="CP000866">
    <property type="protein sequence ID" value="ABX12768.1"/>
    <property type="molecule type" value="Genomic_DNA"/>
</dbReference>
<dbReference type="RefSeq" id="WP_012215255.1">
    <property type="nucleotide sequence ID" value="NC_010085.1"/>
</dbReference>
<dbReference type="SMR" id="A9A1D3"/>
<dbReference type="STRING" id="436308.Nmar_0872"/>
<dbReference type="EnsemblBacteria" id="ABX12768">
    <property type="protein sequence ID" value="ABX12768"/>
    <property type="gene ID" value="Nmar_0872"/>
</dbReference>
<dbReference type="GeneID" id="5774332"/>
<dbReference type="KEGG" id="nmr:Nmar_0872"/>
<dbReference type="eggNOG" id="arCOG04346">
    <property type="taxonomic scope" value="Archaea"/>
</dbReference>
<dbReference type="HOGENOM" id="CLU_065084_0_0_2"/>
<dbReference type="InParanoid" id="A9A1D3"/>
<dbReference type="OrthoDB" id="98133at2157"/>
<dbReference type="PhylomeDB" id="A9A1D3"/>
<dbReference type="UniPathway" id="UPA00074">
    <property type="reaction ID" value="UER00134"/>
</dbReference>
<dbReference type="Proteomes" id="UP000000792">
    <property type="component" value="Chromosome"/>
</dbReference>
<dbReference type="GO" id="GO:0005524">
    <property type="term" value="F:ATP binding"/>
    <property type="evidence" value="ECO:0007669"/>
    <property type="project" value="UniProtKB-KW"/>
</dbReference>
<dbReference type="GO" id="GO:0016879">
    <property type="term" value="F:ligase activity, forming carbon-nitrogen bonds"/>
    <property type="evidence" value="ECO:0007669"/>
    <property type="project" value="UniProtKB-UniRule"/>
</dbReference>
<dbReference type="GO" id="GO:0000287">
    <property type="term" value="F:magnesium ion binding"/>
    <property type="evidence" value="ECO:0007669"/>
    <property type="project" value="InterPro"/>
</dbReference>
<dbReference type="GO" id="GO:0006189">
    <property type="term" value="P:'de novo' IMP biosynthetic process"/>
    <property type="evidence" value="ECO:0007669"/>
    <property type="project" value="UniProtKB-UniRule"/>
</dbReference>
<dbReference type="Gene3D" id="3.40.50.20">
    <property type="match status" value="1"/>
</dbReference>
<dbReference type="Gene3D" id="3.30.1490.20">
    <property type="entry name" value="ATP-grasp fold, A domain"/>
    <property type="match status" value="1"/>
</dbReference>
<dbReference type="Gene3D" id="3.30.470.20">
    <property type="entry name" value="ATP-grasp fold, B domain"/>
    <property type="match status" value="1"/>
</dbReference>
<dbReference type="HAMAP" id="MF_01163">
    <property type="entry name" value="IMP_biosynth_PurP"/>
    <property type="match status" value="1"/>
</dbReference>
<dbReference type="InterPro" id="IPR013815">
    <property type="entry name" value="ATP_grasp_subdomain_1"/>
</dbReference>
<dbReference type="InterPro" id="IPR023656">
    <property type="entry name" value="IMP_biosynth_PurP"/>
</dbReference>
<dbReference type="InterPro" id="IPR009720">
    <property type="entry name" value="IMP_biosynth_PurP_C"/>
</dbReference>
<dbReference type="InterPro" id="IPR010672">
    <property type="entry name" value="IMP_biosynth_PurP_N"/>
</dbReference>
<dbReference type="InterPro" id="IPR016185">
    <property type="entry name" value="PreATP-grasp_dom_sf"/>
</dbReference>
<dbReference type="PANTHER" id="PTHR38147:SF2">
    <property type="entry name" value="5-FORMAMINOIMIDAZOLE-4-CARBOXAMIDE-1-(BETA)-D-RIBOFURANOSYL 5'-MONOPHOSPHATE SYNTHETASE"/>
    <property type="match status" value="1"/>
</dbReference>
<dbReference type="PANTHER" id="PTHR38147">
    <property type="entry name" value="5-FORMAMINOIMIDAZOLE-4-CARBOXAMIDE-1-(BETA)-D-RIBOFURANOSYL 5'-MONOPHOSPHATE SYNTHETASE-RELATED"/>
    <property type="match status" value="1"/>
</dbReference>
<dbReference type="Pfam" id="PF06849">
    <property type="entry name" value="DUF1246"/>
    <property type="match status" value="1"/>
</dbReference>
<dbReference type="Pfam" id="PF06973">
    <property type="entry name" value="DUF1297"/>
    <property type="match status" value="1"/>
</dbReference>
<dbReference type="PIRSF" id="PIRSF004602">
    <property type="entry name" value="ATPgrasp_PurP"/>
    <property type="match status" value="1"/>
</dbReference>
<dbReference type="SUPFAM" id="SSF56059">
    <property type="entry name" value="Glutathione synthetase ATP-binding domain-like"/>
    <property type="match status" value="1"/>
</dbReference>
<dbReference type="SUPFAM" id="SSF52440">
    <property type="entry name" value="PreATP-grasp domain"/>
    <property type="match status" value="1"/>
</dbReference>
<proteinExistence type="inferred from homology"/>
<reference key="1">
    <citation type="journal article" date="2010" name="Proc. Natl. Acad. Sci. U.S.A.">
        <title>Nitrosopumilus maritimus genome reveals unique mechanisms for nitrification and autotrophy in globally distributed marine crenarchaea.</title>
        <authorList>
            <person name="Walker C.B."/>
            <person name="de la Torre J.R."/>
            <person name="Klotz M.G."/>
            <person name="Urakawa H."/>
            <person name="Pinel N."/>
            <person name="Arp D.J."/>
            <person name="Brochier-Armanet C."/>
            <person name="Chain P.S."/>
            <person name="Chan P.P."/>
            <person name="Gollabgir A."/>
            <person name="Hemp J."/>
            <person name="Hugler M."/>
            <person name="Karr E.A."/>
            <person name="Konneke M."/>
            <person name="Shin M."/>
            <person name="Lawton T.J."/>
            <person name="Lowe T."/>
            <person name="Martens-Habbena W."/>
            <person name="Sayavedra-Soto L.A."/>
            <person name="Lang D."/>
            <person name="Sievert S.M."/>
            <person name="Rosenzweig A.C."/>
            <person name="Manning G."/>
            <person name="Stahl D.A."/>
        </authorList>
    </citation>
    <scope>NUCLEOTIDE SEQUENCE [LARGE SCALE GENOMIC DNA]</scope>
    <source>
        <strain>SCM1</strain>
    </source>
</reference>
<keyword id="KW-0067">ATP-binding</keyword>
<keyword id="KW-0436">Ligase</keyword>
<keyword id="KW-0460">Magnesium</keyword>
<keyword id="KW-0464">Manganese</keyword>
<keyword id="KW-0479">Metal-binding</keyword>
<keyword id="KW-0547">Nucleotide-binding</keyword>
<keyword id="KW-0658">Purine biosynthesis</keyword>
<keyword id="KW-1185">Reference proteome</keyword>
<sequence length="341" mass="38509">MASIATLGSHCSLQVLKGAKDEGLKTILVCEKKREKLYRRFPFIDELIIVDKFREVLDEKVQSTLEQNDAVLIPHGTLIAQMSSDEIESIKTPIFGNKWILRWESDREMKEKLMREATLPMPKPVTNPSEIEKLSIVKRQGAAGGKGYFMAANEDDYNTKRNQLISEGVISEDETLYIQEYAAGVLAYLTFFYSPLKEELEFYGVDQRHESDIEGLGRIPAEQQMKSNKVPSFNVIGNSPLVLRESLLDEVYTMGENFVEASKRIVAPGMNGPFCIEGVYDENAQFTSFEFSARIVAGSNIYMDGSPYYNLLFNETMSMGKRIAREVKTAAETNQLDKVTT</sequence>
<name>PURP_NITMS</name>
<feature type="chain" id="PRO_0000348630" description="5-formaminoimidazole-4-carboxamide-1-(beta)-D-ribofuranosyl 5'-monophosphate synthetase">
    <location>
        <begin position="1"/>
        <end position="341"/>
    </location>
</feature>
<feature type="domain" description="ATP-grasp" evidence="2">
    <location>
        <begin position="106"/>
        <end position="317"/>
    </location>
</feature>
<feature type="binding site" evidence="2">
    <location>
        <position position="10"/>
    </location>
    <ligand>
        <name>5-amino-1-(5-phospho-beta-D-ribosyl)imidazole-4-carboxamide</name>
        <dbReference type="ChEBI" id="CHEBI:58475"/>
    </ligand>
</feature>
<feature type="binding site" evidence="2">
    <location>
        <position position="77"/>
    </location>
    <ligand>
        <name>5-amino-1-(5-phospho-beta-D-ribosyl)imidazole-4-carboxamide</name>
        <dbReference type="ChEBI" id="CHEBI:58475"/>
    </ligand>
</feature>
<feature type="binding site" evidence="2">
    <location>
        <begin position="132"/>
        <end position="188"/>
    </location>
    <ligand>
        <name>ATP</name>
        <dbReference type="ChEBI" id="CHEBI:30616"/>
    </ligand>
</feature>
<feature type="binding site" evidence="2">
    <location>
        <position position="210"/>
    </location>
    <ligand>
        <name>ATP</name>
        <dbReference type="ChEBI" id="CHEBI:30616"/>
    </ligand>
</feature>
<feature type="binding site" evidence="2">
    <location>
        <position position="238"/>
    </location>
    <ligand>
        <name>5-amino-1-(5-phospho-beta-D-ribosyl)imidazole-4-carboxamide</name>
        <dbReference type="ChEBI" id="CHEBI:58475"/>
    </ligand>
</feature>
<feature type="binding site" evidence="2">
    <location>
        <position position="277"/>
    </location>
    <ligand>
        <name>Mg(2+)</name>
        <dbReference type="ChEBI" id="CHEBI:18420"/>
    </ligand>
</feature>
<feature type="binding site" evidence="2">
    <location>
        <position position="290"/>
    </location>
    <ligand>
        <name>Mg(2+)</name>
        <dbReference type="ChEBI" id="CHEBI:18420"/>
    </ligand>
</feature>
<gene>
    <name evidence="2" type="primary">purP</name>
    <name type="ordered locus">Nmar_0872</name>
</gene>